<dbReference type="EC" id="3.1.3.5" evidence="1"/>
<dbReference type="EMBL" id="CP000786">
    <property type="protein sequence ID" value="ABZ96597.1"/>
    <property type="molecule type" value="Genomic_DNA"/>
</dbReference>
<dbReference type="RefSeq" id="WP_012387484.1">
    <property type="nucleotide sequence ID" value="NC_010602.1"/>
</dbReference>
<dbReference type="SMR" id="B0SJM4"/>
<dbReference type="STRING" id="456481.LEPBI_I0458"/>
<dbReference type="KEGG" id="lbi:LEPBI_I0458"/>
<dbReference type="HOGENOM" id="CLU_045192_1_2_12"/>
<dbReference type="OrthoDB" id="9780815at2"/>
<dbReference type="BioCyc" id="LBIF456481:LEPBI_RS02230-MONOMER"/>
<dbReference type="Proteomes" id="UP000001847">
    <property type="component" value="Chromosome I"/>
</dbReference>
<dbReference type="GO" id="GO:0005737">
    <property type="term" value="C:cytoplasm"/>
    <property type="evidence" value="ECO:0007669"/>
    <property type="project" value="UniProtKB-SubCell"/>
</dbReference>
<dbReference type="GO" id="GO:0008254">
    <property type="term" value="F:3'-nucleotidase activity"/>
    <property type="evidence" value="ECO:0007669"/>
    <property type="project" value="TreeGrafter"/>
</dbReference>
<dbReference type="GO" id="GO:0008253">
    <property type="term" value="F:5'-nucleotidase activity"/>
    <property type="evidence" value="ECO:0007669"/>
    <property type="project" value="UniProtKB-UniRule"/>
</dbReference>
<dbReference type="GO" id="GO:0004309">
    <property type="term" value="F:exopolyphosphatase activity"/>
    <property type="evidence" value="ECO:0007669"/>
    <property type="project" value="TreeGrafter"/>
</dbReference>
<dbReference type="GO" id="GO:0046872">
    <property type="term" value="F:metal ion binding"/>
    <property type="evidence" value="ECO:0007669"/>
    <property type="project" value="UniProtKB-UniRule"/>
</dbReference>
<dbReference type="GO" id="GO:0000166">
    <property type="term" value="F:nucleotide binding"/>
    <property type="evidence" value="ECO:0007669"/>
    <property type="project" value="UniProtKB-KW"/>
</dbReference>
<dbReference type="Gene3D" id="3.40.1210.10">
    <property type="entry name" value="Survival protein SurE-like phosphatase/nucleotidase"/>
    <property type="match status" value="1"/>
</dbReference>
<dbReference type="HAMAP" id="MF_00060">
    <property type="entry name" value="SurE"/>
    <property type="match status" value="1"/>
</dbReference>
<dbReference type="InterPro" id="IPR030048">
    <property type="entry name" value="SurE"/>
</dbReference>
<dbReference type="InterPro" id="IPR002828">
    <property type="entry name" value="SurE-like_Pase/nucleotidase"/>
</dbReference>
<dbReference type="InterPro" id="IPR036523">
    <property type="entry name" value="SurE-like_sf"/>
</dbReference>
<dbReference type="NCBIfam" id="TIGR00087">
    <property type="entry name" value="surE"/>
    <property type="match status" value="1"/>
</dbReference>
<dbReference type="PANTHER" id="PTHR30457">
    <property type="entry name" value="5'-NUCLEOTIDASE SURE"/>
    <property type="match status" value="1"/>
</dbReference>
<dbReference type="PANTHER" id="PTHR30457:SF12">
    <property type="entry name" value="5'_3'-NUCLEOTIDASE SURE"/>
    <property type="match status" value="1"/>
</dbReference>
<dbReference type="Pfam" id="PF01975">
    <property type="entry name" value="SurE"/>
    <property type="match status" value="1"/>
</dbReference>
<dbReference type="SUPFAM" id="SSF64167">
    <property type="entry name" value="SurE-like"/>
    <property type="match status" value="1"/>
</dbReference>
<feature type="chain" id="PRO_1000092014" description="5'-nucleotidase SurE">
    <location>
        <begin position="1"/>
        <end position="247"/>
    </location>
</feature>
<feature type="binding site" evidence="1">
    <location>
        <position position="8"/>
    </location>
    <ligand>
        <name>a divalent metal cation</name>
        <dbReference type="ChEBI" id="CHEBI:60240"/>
    </ligand>
</feature>
<feature type="binding site" evidence="1">
    <location>
        <position position="9"/>
    </location>
    <ligand>
        <name>a divalent metal cation</name>
        <dbReference type="ChEBI" id="CHEBI:60240"/>
    </ligand>
</feature>
<feature type="binding site" evidence="1">
    <location>
        <position position="39"/>
    </location>
    <ligand>
        <name>a divalent metal cation</name>
        <dbReference type="ChEBI" id="CHEBI:60240"/>
    </ligand>
</feature>
<feature type="binding site" evidence="1">
    <location>
        <position position="91"/>
    </location>
    <ligand>
        <name>a divalent metal cation</name>
        <dbReference type="ChEBI" id="CHEBI:60240"/>
    </ligand>
</feature>
<sequence length="247" mass="27391">MNLLITNDDGISSAGIKALERVLGKSYNTYLIAPLKERSVTSMALTVFQGMRVERINDNHYIADGFPVDCVNIGLYAEIFPKIDFVISGINRGVNMGYDVHYSGTVGAAKHGALHGIPSLAVSSGRIDPEDGYEKEAELVLAFLEQYKSQIQSGEIWNLNFPPEVSGTGTISELVFTRLGRRRYSEKYEKKQIIEGVSEFQLNGSLLGHDEETGTDFEAYAQGKIPLTPIQLDLTEKNRLKELLTNR</sequence>
<reference key="1">
    <citation type="journal article" date="2008" name="PLoS ONE">
        <title>Genome sequence of the saprophyte Leptospira biflexa provides insights into the evolution of Leptospira and the pathogenesis of leptospirosis.</title>
        <authorList>
            <person name="Picardeau M."/>
            <person name="Bulach D.M."/>
            <person name="Bouchier C."/>
            <person name="Zuerner R.L."/>
            <person name="Zidane N."/>
            <person name="Wilson P.J."/>
            <person name="Creno S."/>
            <person name="Kuczek E.S."/>
            <person name="Bommezzadri S."/>
            <person name="Davis J.C."/>
            <person name="McGrath A."/>
            <person name="Johnson M.J."/>
            <person name="Boursaux-Eude C."/>
            <person name="Seemann T."/>
            <person name="Rouy Z."/>
            <person name="Coppel R.L."/>
            <person name="Rood J.I."/>
            <person name="Lajus A."/>
            <person name="Davies J.K."/>
            <person name="Medigue C."/>
            <person name="Adler B."/>
        </authorList>
    </citation>
    <scope>NUCLEOTIDE SEQUENCE [LARGE SCALE GENOMIC DNA]</scope>
    <source>
        <strain>Patoc 1 / ATCC 23582 / Paris</strain>
    </source>
</reference>
<evidence type="ECO:0000255" key="1">
    <source>
        <dbReference type="HAMAP-Rule" id="MF_00060"/>
    </source>
</evidence>
<keyword id="KW-0963">Cytoplasm</keyword>
<keyword id="KW-0378">Hydrolase</keyword>
<keyword id="KW-0479">Metal-binding</keyword>
<keyword id="KW-0547">Nucleotide-binding</keyword>
<keyword id="KW-1185">Reference proteome</keyword>
<gene>
    <name evidence="1" type="primary">surE</name>
    <name type="ordered locus">LEPBI_I0458</name>
</gene>
<protein>
    <recommendedName>
        <fullName evidence="1">5'-nucleotidase SurE</fullName>
        <ecNumber evidence="1">3.1.3.5</ecNumber>
    </recommendedName>
    <alternativeName>
        <fullName evidence="1">Nucleoside 5'-monophosphate phosphohydrolase</fullName>
    </alternativeName>
</protein>
<organism>
    <name type="scientific">Leptospira biflexa serovar Patoc (strain Patoc 1 / ATCC 23582 / Paris)</name>
    <dbReference type="NCBI Taxonomy" id="456481"/>
    <lineage>
        <taxon>Bacteria</taxon>
        <taxon>Pseudomonadati</taxon>
        <taxon>Spirochaetota</taxon>
        <taxon>Spirochaetia</taxon>
        <taxon>Leptospirales</taxon>
        <taxon>Leptospiraceae</taxon>
        <taxon>Leptospira</taxon>
    </lineage>
</organism>
<accession>B0SJM4</accession>
<name>SURE_LEPBP</name>
<comment type="function">
    <text evidence="1">Nucleotidase that shows phosphatase activity on nucleoside 5'-monophosphates.</text>
</comment>
<comment type="catalytic activity">
    <reaction evidence="1">
        <text>a ribonucleoside 5'-phosphate + H2O = a ribonucleoside + phosphate</text>
        <dbReference type="Rhea" id="RHEA:12484"/>
        <dbReference type="ChEBI" id="CHEBI:15377"/>
        <dbReference type="ChEBI" id="CHEBI:18254"/>
        <dbReference type="ChEBI" id="CHEBI:43474"/>
        <dbReference type="ChEBI" id="CHEBI:58043"/>
        <dbReference type="EC" id="3.1.3.5"/>
    </reaction>
</comment>
<comment type="cofactor">
    <cofactor evidence="1">
        <name>a divalent metal cation</name>
        <dbReference type="ChEBI" id="CHEBI:60240"/>
    </cofactor>
    <text evidence="1">Binds 1 divalent metal cation per subunit.</text>
</comment>
<comment type="subcellular location">
    <subcellularLocation>
        <location evidence="1">Cytoplasm</location>
    </subcellularLocation>
</comment>
<comment type="similarity">
    <text evidence="1">Belongs to the SurE nucleotidase family.</text>
</comment>
<proteinExistence type="inferred from homology"/>